<sequence length="1770" mass="201962">MESQQLHQNPHSLHGSAAASVTSKEVPSNQDPLAVSASNLPEFDRDSTKVNSQQETTPGTSAVPENHHHVSPQPASVPPPQNGQYQQHGMMTPNKAMASNWAHYQQPSMMTCSHYQTSPAYYQPDPHYPLPQYIPPLSTSSPDPIDSQNQHSEVPQAKTKVRNNVLPPHTLTSEENFSTWVKFYIRFLKNSNLGDIIPNDQGEIKRQMTYEEHAYIYNTFQAFAPFHLLPTWVKQILEINYADILTVLCKSVSKMQTNNQELKDWIALANLEYDGSTSADTFEITVSTIIQRLKENNINVSDRLACQLILKGLSGDFKYLRNQYRTKTNMKLSQLFAEIQLIYDENKIMNLNKPSQYKQHSEYKNVSRTSPNTTNTKVTSRNYHRTNSSKPRAAKAHNIATSSKFSRVNNDHINESTVSSQYLSDDNELSLGQQQKESKPTRTIDSNDELPDHLLIDSGASQTLVRSAHYLHHATPNSEINIVDAQKQDIPINAIGNLHFNFQNGTKTSIKALHTPNIAYDLLSLSELANQNITACFTRNTLERSDGTVLAPIVKHGDFYWLSKKYLIPSHISKLTINNVNKSKSVNKYPYPLIHRMLGHANFRSIQKSLKKNAVTYLKESDIEWSNASTYQCPDCLIGKSTKHRHIKGSRLKYQESYEPFQYLHTDIFGPVHHLPKSAPSYFISFTDEKTRFQWVYPLHDRREESILNVFTSILAFIKNQFNARVLVIQMDRGSEYTNKTLHKFFTNRGITACYTTTADSRAHGVAERLNRTLLNDCRTLLHCSGLPNHLWFSAVEFSTIIRNSLVSPKNDKSARQHAGLAGLDITTILPFGQPVIVNNHNPDSKIHPRGIPGYALHPSRNSYGYIIYLPSLKKTVDTTNYVILQDNQSKLDQFNYDTLTFDDDLNRLTAHNQSFIEQNETEQSYDQNTESDHDYQSEIEINSDPLVNDFSSQSLNPLQLDKEPVQKVRAPKEVDADISEYNILPSTIRSRTPHIINKESTEMGGTIESDTTSPRHSSTFTARNQKRPGSPNDMIDLTSQDRVNYGLENIKTTRLGGTEEPYIQRNSDTNIKYRTTNSTPSIDDRSSNSESTTPIISIETKAVCDNTPSIDTDPPEYRSSDHATPNIMPDKSSKNVTADSILDDLPLPDLTNKSPTDTSDVSKDIPHIHSRQTNSSLGGMDDSNVLTTTKSKKRSLEDNETEIEVSRDTWNNKNMRSLEPPRSKKRINLIAAIKGVKSIKPVRTTLRYDEAITYNKDNKEKDRYVEAYHKEISQLLKMNTWDTNKYYDRNDIDPKKVINSMFIFNKKRDGTHKARFVARGDIQHPDTYDSDMQSNTVHHYALMTSLSIALDNDYYITQLDISSAYLYADIKEELYIRPPPHLGLNDKLLRLRKSLYGLKQSGANWYETIKSYLINCCDMQEVRGWSCVFKNSQVTICLFVDDMILFSKDLNANKKIITTLKKQYDTKIINLGEGDNEIQYDILGLEIKYQRSKYMKLGMEKSLTEKLPKLNVPLNPKGKKLRAPGQPGHYIDQDELEIDEDEYKEKVHEMQKLIGLASYVGYKFRFDLLYYINTLAQHILFPSRQVLDMTYELIQFIWNTRDKQLIWHKSKPVKPTNKLVVISDASYGNQPYYKSQIGNIYLLNGKVIGGKSTKASLTCTSTTEAEIHAVSEAIPLLNNLSHLVQELNKKPIIKGLLTDSRSTISIIKSTNEEKFRNRFFGTKAMRLRDEVSGNNLYVYYIETKMNIADVMTKPLPIKTFKLLTNKWIH</sequence>
<keyword id="KW-0064">Aspartyl protease</keyword>
<keyword id="KW-0067">ATP-binding</keyword>
<keyword id="KW-0963">Cytoplasm</keyword>
<keyword id="KW-0229">DNA integration</keyword>
<keyword id="KW-0233">DNA recombination</keyword>
<keyword id="KW-0238">DNA-binding</keyword>
<keyword id="KW-0239">DNA-directed DNA polymerase</keyword>
<keyword id="KW-0255">Endonuclease</keyword>
<keyword id="KW-0378">Hydrolase</keyword>
<keyword id="KW-0460">Magnesium</keyword>
<keyword id="KW-0479">Metal-binding</keyword>
<keyword id="KW-0511">Multifunctional enzyme</keyword>
<keyword id="KW-0540">Nuclease</keyword>
<keyword id="KW-0547">Nucleotide-binding</keyword>
<keyword id="KW-0548">Nucleotidyltransferase</keyword>
<keyword id="KW-0539">Nucleus</keyword>
<keyword id="KW-0645">Protease</keyword>
<keyword id="KW-1185">Reference proteome</keyword>
<keyword id="KW-0688">Ribosomal frameshifting</keyword>
<keyword id="KW-0694">RNA-binding</keyword>
<keyword id="KW-0695">RNA-directed DNA polymerase</keyword>
<keyword id="KW-0808">Transferase</keyword>
<keyword id="KW-0814">Transposable element</keyword>
<keyword id="KW-0815">Transposition</keyword>
<keyword id="KW-1188">Viral release from host cell</keyword>
<keyword id="KW-0917">Virion maturation</keyword>
<keyword id="KW-0862">Zinc</keyword>
<keyword id="KW-0863">Zinc-finger</keyword>
<dbReference type="EC" id="3.4.23.-"/>
<dbReference type="EC" id="2.7.7.49"/>
<dbReference type="EC" id="2.7.7.7"/>
<dbReference type="EC" id="3.1.26.4"/>
<dbReference type="EMBL" id="Z68329">
    <property type="protein sequence ID" value="CAA92721.1"/>
    <property type="status" value="ALT_SEQ"/>
    <property type="molecule type" value="Genomic_DNA"/>
</dbReference>
<dbReference type="EMBL" id="Z74387">
    <property type="protein sequence ID" value="CAA98914.1"/>
    <property type="molecule type" value="Genomic_DNA"/>
</dbReference>
<dbReference type="EMBL" id="BK006938">
    <property type="protein sequence ID" value="DAA12102.1"/>
    <property type="molecule type" value="Genomic_DNA"/>
</dbReference>
<dbReference type="PIR" id="S69953">
    <property type="entry name" value="S69953"/>
</dbReference>
<dbReference type="RefSeq" id="NP_058146.3">
    <molecule id="Q07791-1"/>
    <property type="nucleotide sequence ID" value="NM_001184423.4"/>
</dbReference>
<dbReference type="BioGRID" id="32314">
    <property type="interactions" value="8"/>
</dbReference>
<dbReference type="DIP" id="DIP-8840N"/>
<dbReference type="FunCoup" id="Q07791">
    <property type="interactions" value="79"/>
</dbReference>
<dbReference type="IntAct" id="Q07791">
    <property type="interactions" value="3"/>
</dbReference>
<dbReference type="MEROPS" id="A11.003"/>
<dbReference type="GlyGen" id="Q07791">
    <property type="glycosylation" value="2 sites, 1 O-linked glycan (2 sites)"/>
</dbReference>
<dbReference type="PaxDb" id="4932-YDR261W-B"/>
<dbReference type="PeptideAtlas" id="Q07791"/>
<dbReference type="GeneID" id="851851"/>
<dbReference type="KEGG" id="sce:YDR261W-B"/>
<dbReference type="AGR" id="SGD:S000007397"/>
<dbReference type="SGD" id="S000007397">
    <property type="gene designation" value="YDR261W-B"/>
</dbReference>
<dbReference type="VEuPathDB" id="FungiDB:YDR261W-B"/>
<dbReference type="eggNOG" id="KOG0017">
    <property type="taxonomic scope" value="Eukaryota"/>
</dbReference>
<dbReference type="HOGENOM" id="CLU_244151_0_0_1"/>
<dbReference type="InParanoid" id="Q07791"/>
<dbReference type="OrthoDB" id="4046078at2759"/>
<dbReference type="Proteomes" id="UP000002311">
    <property type="component" value="Chromosome IV"/>
</dbReference>
<dbReference type="RNAct" id="Q07791">
    <property type="molecule type" value="protein"/>
</dbReference>
<dbReference type="GO" id="GO:0005737">
    <property type="term" value="C:cytoplasm"/>
    <property type="evidence" value="ECO:0007669"/>
    <property type="project" value="UniProtKB-SubCell"/>
</dbReference>
<dbReference type="GO" id="GO:0005634">
    <property type="term" value="C:nucleus"/>
    <property type="evidence" value="ECO:0000314"/>
    <property type="project" value="SGD"/>
</dbReference>
<dbReference type="GO" id="GO:0004190">
    <property type="term" value="F:aspartic-type endopeptidase activity"/>
    <property type="evidence" value="ECO:0007669"/>
    <property type="project" value="UniProtKB-KW"/>
</dbReference>
<dbReference type="GO" id="GO:0005524">
    <property type="term" value="F:ATP binding"/>
    <property type="evidence" value="ECO:0007669"/>
    <property type="project" value="UniProtKB-KW"/>
</dbReference>
<dbReference type="GO" id="GO:0003677">
    <property type="term" value="F:DNA binding"/>
    <property type="evidence" value="ECO:0007669"/>
    <property type="project" value="UniProtKB-KW"/>
</dbReference>
<dbReference type="GO" id="GO:0003887">
    <property type="term" value="F:DNA-directed DNA polymerase activity"/>
    <property type="evidence" value="ECO:0007669"/>
    <property type="project" value="UniProtKB-KW"/>
</dbReference>
<dbReference type="GO" id="GO:0003723">
    <property type="term" value="F:RNA binding"/>
    <property type="evidence" value="ECO:0007669"/>
    <property type="project" value="UniProtKB-KW"/>
</dbReference>
<dbReference type="GO" id="GO:0003964">
    <property type="term" value="F:RNA-directed DNA polymerase activity"/>
    <property type="evidence" value="ECO:0007669"/>
    <property type="project" value="UniProtKB-KW"/>
</dbReference>
<dbReference type="GO" id="GO:0004523">
    <property type="term" value="F:RNA-DNA hybrid ribonuclease activity"/>
    <property type="evidence" value="ECO:0007669"/>
    <property type="project" value="UniProtKB-EC"/>
</dbReference>
<dbReference type="GO" id="GO:0008270">
    <property type="term" value="F:zinc ion binding"/>
    <property type="evidence" value="ECO:0007669"/>
    <property type="project" value="UniProtKB-KW"/>
</dbReference>
<dbReference type="GO" id="GO:0015074">
    <property type="term" value="P:DNA integration"/>
    <property type="evidence" value="ECO:0007669"/>
    <property type="project" value="UniProtKB-KW"/>
</dbReference>
<dbReference type="GO" id="GO:0006310">
    <property type="term" value="P:DNA recombination"/>
    <property type="evidence" value="ECO:0007669"/>
    <property type="project" value="UniProtKB-KW"/>
</dbReference>
<dbReference type="GO" id="GO:0006508">
    <property type="term" value="P:proteolysis"/>
    <property type="evidence" value="ECO:0007669"/>
    <property type="project" value="UniProtKB-KW"/>
</dbReference>
<dbReference type="GO" id="GO:0032196">
    <property type="term" value="P:transposition"/>
    <property type="evidence" value="ECO:0007669"/>
    <property type="project" value="UniProtKB-KW"/>
</dbReference>
<dbReference type="GO" id="GO:0075523">
    <property type="term" value="P:viral translational frameshifting"/>
    <property type="evidence" value="ECO:0007669"/>
    <property type="project" value="UniProtKB-KW"/>
</dbReference>
<dbReference type="CDD" id="cd09272">
    <property type="entry name" value="RNase_HI_RT_Ty1"/>
    <property type="match status" value="1"/>
</dbReference>
<dbReference type="FunFam" id="3.30.420.10:FF:000050">
    <property type="entry name" value="Transposon Ty2-DR3 Gag-Pol polyprotein"/>
    <property type="match status" value="1"/>
</dbReference>
<dbReference type="Gene3D" id="3.30.420.10">
    <property type="entry name" value="Ribonuclease H-like superfamily/Ribonuclease H"/>
    <property type="match status" value="1"/>
</dbReference>
<dbReference type="InterPro" id="IPR043502">
    <property type="entry name" value="DNA/RNA_pol_sf"/>
</dbReference>
<dbReference type="InterPro" id="IPR001584">
    <property type="entry name" value="Integrase_cat-core"/>
</dbReference>
<dbReference type="InterPro" id="IPR054722">
    <property type="entry name" value="PolX-like_BBD"/>
</dbReference>
<dbReference type="InterPro" id="IPR039537">
    <property type="entry name" value="Retrotran_Ty1/copia-like"/>
</dbReference>
<dbReference type="InterPro" id="IPR012337">
    <property type="entry name" value="RNaseH-like_sf"/>
</dbReference>
<dbReference type="InterPro" id="IPR036397">
    <property type="entry name" value="RNaseH_sf"/>
</dbReference>
<dbReference type="InterPro" id="IPR013103">
    <property type="entry name" value="RVT_2"/>
</dbReference>
<dbReference type="InterPro" id="IPR015820">
    <property type="entry name" value="TYA"/>
</dbReference>
<dbReference type="PANTHER" id="PTHR42648">
    <property type="entry name" value="TRANSPOSASE, PUTATIVE-RELATED"/>
    <property type="match status" value="1"/>
</dbReference>
<dbReference type="PANTHER" id="PTHR42648:SF11">
    <property type="entry name" value="TRANSPOSON TY4-P GAG-POL POLYPROTEIN"/>
    <property type="match status" value="1"/>
</dbReference>
<dbReference type="Pfam" id="PF22936">
    <property type="entry name" value="Pol_BBD"/>
    <property type="match status" value="1"/>
</dbReference>
<dbReference type="Pfam" id="PF00665">
    <property type="entry name" value="rve"/>
    <property type="match status" value="1"/>
</dbReference>
<dbReference type="Pfam" id="PF07727">
    <property type="entry name" value="RVT_2"/>
    <property type="match status" value="1"/>
</dbReference>
<dbReference type="Pfam" id="PF01021">
    <property type="entry name" value="TYA"/>
    <property type="match status" value="1"/>
</dbReference>
<dbReference type="SUPFAM" id="SSF56672">
    <property type="entry name" value="DNA/RNA polymerases"/>
    <property type="match status" value="1"/>
</dbReference>
<dbReference type="SUPFAM" id="SSF53098">
    <property type="entry name" value="Ribonuclease H-like"/>
    <property type="match status" value="1"/>
</dbReference>
<dbReference type="PROSITE" id="PS50994">
    <property type="entry name" value="INTEGRASE"/>
    <property type="match status" value="1"/>
</dbReference>
<accession>Q07791</accession>
<accession>D6VSP2</accession>
<accession>Q03934</accession>
<proteinExistence type="inferred from homology"/>
<reference key="1">
    <citation type="journal article" date="1997" name="Nature">
        <title>The nucleotide sequence of Saccharomyces cerevisiae chromosome IV.</title>
        <authorList>
            <person name="Jacq C."/>
            <person name="Alt-Moerbe J."/>
            <person name="Andre B."/>
            <person name="Arnold W."/>
            <person name="Bahr A."/>
            <person name="Ballesta J.P.G."/>
            <person name="Bargues M."/>
            <person name="Baron L."/>
            <person name="Becker A."/>
            <person name="Biteau N."/>
            <person name="Bloecker H."/>
            <person name="Blugeon C."/>
            <person name="Boskovic J."/>
            <person name="Brandt P."/>
            <person name="Brueckner M."/>
            <person name="Buitrago M.J."/>
            <person name="Coster F."/>
            <person name="Delaveau T."/>
            <person name="del Rey F."/>
            <person name="Dujon B."/>
            <person name="Eide L.G."/>
            <person name="Garcia-Cantalejo J.M."/>
            <person name="Goffeau A."/>
            <person name="Gomez-Peris A."/>
            <person name="Granotier C."/>
            <person name="Hanemann V."/>
            <person name="Hankeln T."/>
            <person name="Hoheisel J.D."/>
            <person name="Jaeger W."/>
            <person name="Jimenez A."/>
            <person name="Jonniaux J.-L."/>
            <person name="Kraemer C."/>
            <person name="Kuester H."/>
            <person name="Laamanen P."/>
            <person name="Legros Y."/>
            <person name="Louis E.J."/>
            <person name="Moeller-Rieker S."/>
            <person name="Monnet A."/>
            <person name="Moro M."/>
            <person name="Mueller-Auer S."/>
            <person name="Nussbaumer B."/>
            <person name="Paricio N."/>
            <person name="Paulin L."/>
            <person name="Perea J."/>
            <person name="Perez-Alonso M."/>
            <person name="Perez-Ortin J.E."/>
            <person name="Pohl T.M."/>
            <person name="Prydz H."/>
            <person name="Purnelle B."/>
            <person name="Rasmussen S.W."/>
            <person name="Remacha M.A."/>
            <person name="Revuelta J.L."/>
            <person name="Rieger M."/>
            <person name="Salom D."/>
            <person name="Saluz H.P."/>
            <person name="Saiz J.E."/>
            <person name="Saren A.-M."/>
            <person name="Schaefer M."/>
            <person name="Scharfe M."/>
            <person name="Schmidt E.R."/>
            <person name="Schneider C."/>
            <person name="Scholler P."/>
            <person name="Schwarz S."/>
            <person name="Soler-Mira A."/>
            <person name="Urrestarazu L.A."/>
            <person name="Verhasselt P."/>
            <person name="Vissers S."/>
            <person name="Voet M."/>
            <person name="Volckaert G."/>
            <person name="Wagner G."/>
            <person name="Wambutt R."/>
            <person name="Wedler E."/>
            <person name="Wedler H."/>
            <person name="Woelfl S."/>
            <person name="Harris D.E."/>
            <person name="Bowman S."/>
            <person name="Brown D."/>
            <person name="Churcher C.M."/>
            <person name="Connor R."/>
            <person name="Dedman K."/>
            <person name="Gentles S."/>
            <person name="Hamlin N."/>
            <person name="Hunt S."/>
            <person name="Jones L."/>
            <person name="McDonald S."/>
            <person name="Murphy L.D."/>
            <person name="Niblett D."/>
            <person name="Odell C."/>
            <person name="Oliver K."/>
            <person name="Rajandream M.A."/>
            <person name="Richards C."/>
            <person name="Shore L."/>
            <person name="Walsh S.V."/>
            <person name="Barrell B.G."/>
            <person name="Dietrich F.S."/>
            <person name="Mulligan J.T."/>
            <person name="Allen E."/>
            <person name="Araujo R."/>
            <person name="Aviles E."/>
            <person name="Berno A."/>
            <person name="Carpenter J."/>
            <person name="Chen E."/>
            <person name="Cherry J.M."/>
            <person name="Chung E."/>
            <person name="Duncan M."/>
            <person name="Hunicke-Smith S."/>
            <person name="Hyman R.W."/>
            <person name="Komp C."/>
            <person name="Lashkari D."/>
            <person name="Lew H."/>
            <person name="Lin D."/>
            <person name="Mosedale D."/>
            <person name="Nakahara K."/>
            <person name="Namath A."/>
            <person name="Oefner P."/>
            <person name="Oh C."/>
            <person name="Petel F.X."/>
            <person name="Roberts D."/>
            <person name="Schramm S."/>
            <person name="Schroeder M."/>
            <person name="Shogren T."/>
            <person name="Shroff N."/>
            <person name="Winant A."/>
            <person name="Yelton M.A."/>
            <person name="Botstein D."/>
            <person name="Davis R.W."/>
            <person name="Johnston M."/>
            <person name="Andrews S."/>
            <person name="Brinkman R."/>
            <person name="Cooper J."/>
            <person name="Ding H."/>
            <person name="Du Z."/>
            <person name="Favello A."/>
            <person name="Fulton L."/>
            <person name="Gattung S."/>
            <person name="Greco T."/>
            <person name="Hallsworth K."/>
            <person name="Hawkins J."/>
            <person name="Hillier L.W."/>
            <person name="Jier M."/>
            <person name="Johnson D."/>
            <person name="Johnston L."/>
            <person name="Kirsten J."/>
            <person name="Kucaba T."/>
            <person name="Langston Y."/>
            <person name="Latreille P."/>
            <person name="Le T."/>
            <person name="Mardis E."/>
            <person name="Menezes S."/>
            <person name="Miller N."/>
            <person name="Nhan M."/>
            <person name="Pauley A."/>
            <person name="Peluso D."/>
            <person name="Rifkin L."/>
            <person name="Riles L."/>
            <person name="Taich A."/>
            <person name="Trevaskis E."/>
            <person name="Vignati D."/>
            <person name="Wilcox L."/>
            <person name="Wohldman P."/>
            <person name="Vaudin M."/>
            <person name="Wilson R."/>
            <person name="Waterston R."/>
            <person name="Albermann K."/>
            <person name="Hani J."/>
            <person name="Heumann K."/>
            <person name="Kleine K."/>
            <person name="Mewes H.-W."/>
            <person name="Zollner A."/>
            <person name="Zaccaria P."/>
        </authorList>
    </citation>
    <scope>NUCLEOTIDE SEQUENCE [LARGE SCALE GENOMIC DNA]</scope>
    <source>
        <strain>ATCC 204508 / S288c</strain>
    </source>
</reference>
<reference key="2">
    <citation type="journal article" date="2014" name="G3 (Bethesda)">
        <title>The reference genome sequence of Saccharomyces cerevisiae: Then and now.</title>
        <authorList>
            <person name="Engel S.R."/>
            <person name="Dietrich F.S."/>
            <person name="Fisk D.G."/>
            <person name="Binkley G."/>
            <person name="Balakrishnan R."/>
            <person name="Costanzo M.C."/>
            <person name="Dwight S.S."/>
            <person name="Hitz B.C."/>
            <person name="Karra K."/>
            <person name="Nash R.S."/>
            <person name="Weng S."/>
            <person name="Wong E.D."/>
            <person name="Lloyd P."/>
            <person name="Skrzypek M.S."/>
            <person name="Miyasato S.R."/>
            <person name="Simison M."/>
            <person name="Cherry J.M."/>
        </authorList>
    </citation>
    <scope>GENOME REANNOTATION</scope>
    <source>
        <strain>ATCC 204508 / S288c</strain>
    </source>
</reference>
<reference key="3">
    <citation type="journal article" date="1998" name="Genome Res.">
        <title>Transposable elements and genome organization: a comprehensive survey of retrotransposons revealed by the complete Saccharomyces cerevisiae genome sequence.</title>
        <authorList>
            <person name="Kim J.M."/>
            <person name="Vanguri S."/>
            <person name="Boeke J.D."/>
            <person name="Gabriel A."/>
            <person name="Voytas D.F."/>
        </authorList>
    </citation>
    <scope>NOMENCLATURE</scope>
</reference>
<reference key="4">
    <citation type="journal article" date="2005" name="Cytogenet. Genome Res.">
        <title>Happy together: the life and times of Ty retrotransposons and their hosts.</title>
        <authorList>
            <person name="Lesage P."/>
            <person name="Todeschini A.L."/>
        </authorList>
    </citation>
    <scope>REVIEW</scope>
</reference>
<name>YD23B_YEAST</name>
<comment type="function">
    <text evidence="1">Capsid protein (CA) is the structural component of the virus-like particle (VLP), forming the shell that encapsulates the retrotransposons dimeric RNA genome. The particles are assembled from trimer-clustered units and there are holes in the capsid shells that allow for the diffusion of macromolecules. CA also has nucleocapsid-like chaperone activity, promoting primer tRNA(i)-Met annealing to the multipartite primer-binding site (PBS), dimerization of Ty2 RNA and initiation of reverse transcription (By similarity).</text>
</comment>
<comment type="function">
    <text evidence="1">The aspartyl protease (PR) mediates the proteolytic cleavages of the Gag and Gag-Pol polyproteins after assembly of the VLP.</text>
</comment>
<comment type="function">
    <text evidence="1">Reverse transcriptase/ribonuclease H (RT) is a multifunctional enzyme that catalyzes the conversion of the retro-elements RNA genome into dsDNA within the VLP. The enzyme displays a DNA polymerase activity that can copy either DNA or RNA templates, and a ribonuclease H (RNase H) activity that cleaves the RNA strand of RNA-DNA heteroduplexes during plus-strand synthesis and hydrolyzes RNA primers. The conversion leads to a linear dsDNA copy of the retrotransposon that includes long terminal repeats (LTRs) at both ends (By similarity).</text>
</comment>
<comment type="function">
    <text evidence="1">Integrase (IN) targets the VLP to the nucleus, where a subparticle preintegration complex (PIC) containing at least integrase and the newly synthesized dsDNA copy of the retrotransposon must transit the nuclear membrane. Once in the nucleus, integrase performs the integration of the dsDNA into the host genome (By similarity).</text>
</comment>
<comment type="catalytic activity">
    <reaction>
        <text>DNA(n) + a 2'-deoxyribonucleoside 5'-triphosphate = DNA(n+1) + diphosphate</text>
        <dbReference type="Rhea" id="RHEA:22508"/>
        <dbReference type="Rhea" id="RHEA-COMP:17339"/>
        <dbReference type="Rhea" id="RHEA-COMP:17340"/>
        <dbReference type="ChEBI" id="CHEBI:33019"/>
        <dbReference type="ChEBI" id="CHEBI:61560"/>
        <dbReference type="ChEBI" id="CHEBI:173112"/>
        <dbReference type="EC" id="2.7.7.49"/>
    </reaction>
</comment>
<comment type="catalytic activity">
    <reaction>
        <text>DNA(n) + a 2'-deoxyribonucleoside 5'-triphosphate = DNA(n+1) + diphosphate</text>
        <dbReference type="Rhea" id="RHEA:22508"/>
        <dbReference type="Rhea" id="RHEA-COMP:17339"/>
        <dbReference type="Rhea" id="RHEA-COMP:17340"/>
        <dbReference type="ChEBI" id="CHEBI:33019"/>
        <dbReference type="ChEBI" id="CHEBI:61560"/>
        <dbReference type="ChEBI" id="CHEBI:173112"/>
        <dbReference type="EC" id="2.7.7.7"/>
    </reaction>
</comment>
<comment type="catalytic activity">
    <reaction>
        <text>Endonucleolytic cleavage to 5'-phosphomonoester.</text>
        <dbReference type="EC" id="3.1.26.4"/>
    </reaction>
</comment>
<comment type="subunit">
    <text evidence="1">The capsid protein forms a homotrimer, from which the VLPs are assembled. The protease is a homodimer, whose active site consists of two apposed aspartic acid residues (By similarity).</text>
</comment>
<comment type="subcellular location">
    <subcellularLocation>
        <location>Cytoplasm</location>
    </subcellularLocation>
    <subcellularLocation>
        <location evidence="1">Nucleus</location>
    </subcellularLocation>
</comment>
<comment type="alternative products">
    <event type="ribosomal frameshifting"/>
    <isoform>
        <id>Q07791-1</id>
        <name>Transposon Ty2-DR3 Gag-Pol polyprotein</name>
        <sequence type="displayed"/>
    </isoform>
    <isoform>
        <id>Q99303-1</id>
        <name>Transposon Ty2-DR3 Gag polyprotein</name>
        <sequence type="external"/>
    </isoform>
    <text>The Gag-Pol polyprotein is generated by a +1 ribosomal frameshift.</text>
</comment>
<comment type="domain">
    <text evidence="1">The C-terminal RNA-binding region of CA is sufficient for all its nucleocapsid-like chaperone activities.</text>
</comment>
<comment type="domain">
    <text evidence="1">Integrase core domain contains the D-x(n)-D-x(35)-E motif, named for the phylogenetically conserved glutamic acid and aspartic acid residues and the invariant 35 amino acid spacing between the second and third acidic residues. Each acidic residue of the D,D(35)E motif is independently essential for the 3'-processing and strand transfer activities of purified integrase protein (By similarity).</text>
</comment>
<comment type="PTM">
    <text evidence="1">Initially, virus-like particles (VLPs) are composed of the structural unprocessed proteins Gag and Gag-Pol, and also contain the host initiator methionine tRNA (tRNA(i)-Met) which serves as a primer for minus-strand DNA synthesis, and a dimer of genomic Ty RNA. Processing of the polyproteins occurs within the particle and proceeds by an ordered pathway, called maturation. First, the protease (PR) is released by autocatalytic cleavage of the Gag-Pol polyprotein, and this cleavage is a prerequisite for subsequent processing at the remaining sites to release the mature structural and catalytic proteins. Maturation takes place prior to the RT reaction and is required to produce transposition-competent VLPs (By similarity).</text>
</comment>
<comment type="miscellaneous">
    <text>Retrotransposons are mobile genetic entities that are able to replicate via an RNA intermediate and a reverse transcription step. In contrast to retroviruses, retrotransposons are non-infectious, lack an envelope and remain intracellular. Ty2 retrotransposons belong to the copia elements (pseudoviridae).</text>
</comment>
<comment type="miscellaneous">
    <molecule>Isoform Transposon Ty2-DR3 Gag-Pol polyprotein</molecule>
    <text>Produced by +1 ribosomal frameshifting between codon Leu-431 and Gly-432 of the YDR261W-A ORF.</text>
</comment>
<comment type="sequence caution" evidence="4">
    <conflict type="erroneous gene model prediction">
        <sequence resource="EMBL-CDS" id="CAA92721"/>
    </conflict>
</comment>
<organism>
    <name type="scientific">Saccharomyces cerevisiae (strain ATCC 204508 / S288c)</name>
    <name type="common">Baker's yeast</name>
    <dbReference type="NCBI Taxonomy" id="559292"/>
    <lineage>
        <taxon>Eukaryota</taxon>
        <taxon>Fungi</taxon>
        <taxon>Dikarya</taxon>
        <taxon>Ascomycota</taxon>
        <taxon>Saccharomycotina</taxon>
        <taxon>Saccharomycetes</taxon>
        <taxon>Saccharomycetales</taxon>
        <taxon>Saccharomycetaceae</taxon>
        <taxon>Saccharomyces</taxon>
    </lineage>
</organism>
<gene>
    <name type="primary">TY2B-DR3</name>
    <name type="synonym">YDRWTy2-3 POL</name>
    <name type="ordered locus">YDR261W-B</name>
    <name type="ORF">YD9320A.14</name>
</gene>
<protein>
    <recommendedName>
        <fullName>Transposon Ty2-DR3 Gag-Pol polyprotein</fullName>
    </recommendedName>
    <alternativeName>
        <fullName>TY2A-TY2B</fullName>
    </alternativeName>
    <alternativeName>
        <fullName>Transposon Ty2 TYA-TYB polyprotein</fullName>
    </alternativeName>
    <component>
        <recommendedName>
            <fullName>Capsid protein</fullName>
            <shortName>CA</shortName>
        </recommendedName>
    </component>
    <component>
        <recommendedName>
            <fullName>Ty2 protease</fullName>
            <shortName>PR</shortName>
            <ecNumber>3.4.23.-</ecNumber>
        </recommendedName>
    </component>
    <component>
        <recommendedName>
            <fullName>Integrase</fullName>
            <shortName>IN</shortName>
        </recommendedName>
    </component>
    <component>
        <recommendedName>
            <fullName>Reverse transcriptase/ribonuclease H</fullName>
            <shortName>RT</shortName>
            <shortName>RT-RH</shortName>
            <ecNumber>2.7.7.49</ecNumber>
            <ecNumber>2.7.7.7</ecNumber>
            <ecNumber>3.1.26.4</ecNumber>
        </recommendedName>
    </component>
</protein>
<feature type="chain" id="PRO_0000279300" description="Transposon Ty2-DR3 Gag-Pol polyprotein">
    <location>
        <begin position="1"/>
        <end position="1770"/>
    </location>
</feature>
<feature type="chain" id="PRO_0000279301" description="Capsid protein" evidence="1">
    <location>
        <begin position="1"/>
        <end position="397"/>
    </location>
</feature>
<feature type="chain" id="PRO_0000279302" description="Ty2 protease" evidence="1">
    <location>
        <begin position="398"/>
        <end position="578"/>
    </location>
</feature>
<feature type="chain" id="PRO_0000279303" description="Integrase" evidence="1">
    <location>
        <begin position="579"/>
        <end position="1232"/>
    </location>
</feature>
<feature type="chain" id="PRO_0000279304" description="Reverse transcriptase/ribonuclease H" evidence="1">
    <location>
        <begin position="1233"/>
        <end position="1770"/>
    </location>
</feature>
<feature type="domain" description="Integrase catalytic" evidence="2">
    <location>
        <begin position="656"/>
        <end position="831"/>
    </location>
</feature>
<feature type="domain" description="Reverse transcriptase Ty1/copia-type">
    <location>
        <begin position="1353"/>
        <end position="1491"/>
    </location>
</feature>
<feature type="domain" description="RNase H Ty1/copia-type">
    <location>
        <begin position="1625"/>
        <end position="1767"/>
    </location>
</feature>
<feature type="region of interest" description="Disordered" evidence="3">
    <location>
        <begin position="1"/>
        <end position="89"/>
    </location>
</feature>
<feature type="region of interest" description="RNA-binding" evidence="1">
    <location>
        <begin position="295"/>
        <end position="397"/>
    </location>
</feature>
<feature type="region of interest" description="Disordered" evidence="3">
    <location>
        <begin position="355"/>
        <end position="449"/>
    </location>
</feature>
<feature type="region of interest" description="Integrase-type zinc finger-like">
    <location>
        <begin position="579"/>
        <end position="636"/>
    </location>
</feature>
<feature type="region of interest" description="Disordered" evidence="3">
    <location>
        <begin position="1005"/>
        <end position="1038"/>
    </location>
</feature>
<feature type="region of interest" description="Disordered" evidence="3">
    <location>
        <begin position="1057"/>
        <end position="1205"/>
    </location>
</feature>
<feature type="short sequence motif" description="Bipartite nuclear localization signal" evidence="1">
    <location>
        <begin position="1193"/>
        <end position="1227"/>
    </location>
</feature>
<feature type="compositionally biased region" description="Polar residues" evidence="3">
    <location>
        <begin position="1"/>
        <end position="11"/>
    </location>
</feature>
<feature type="compositionally biased region" description="Polar residues" evidence="3">
    <location>
        <begin position="19"/>
        <end position="39"/>
    </location>
</feature>
<feature type="compositionally biased region" description="Polar residues" evidence="3">
    <location>
        <begin position="49"/>
        <end position="60"/>
    </location>
</feature>
<feature type="compositionally biased region" description="Polar residues" evidence="3">
    <location>
        <begin position="366"/>
        <end position="390"/>
    </location>
</feature>
<feature type="compositionally biased region" description="Polar residues" evidence="3">
    <location>
        <begin position="399"/>
        <end position="408"/>
    </location>
</feature>
<feature type="compositionally biased region" description="Polar residues" evidence="3">
    <location>
        <begin position="415"/>
        <end position="435"/>
    </location>
</feature>
<feature type="compositionally biased region" description="Polar residues" evidence="3">
    <location>
        <begin position="1009"/>
        <end position="1024"/>
    </location>
</feature>
<feature type="compositionally biased region" description="Polar residues" evidence="3">
    <location>
        <begin position="1065"/>
        <end position="1082"/>
    </location>
</feature>
<feature type="active site" description="For protease activity; shared with dimeric partner" evidence="1">
    <location>
        <position position="457"/>
    </location>
</feature>
<feature type="binding site" evidence="2">
    <location>
        <position position="667"/>
    </location>
    <ligand>
        <name>Mg(2+)</name>
        <dbReference type="ChEBI" id="CHEBI:18420"/>
        <label>1</label>
        <note>catalytic; for integrase activity</note>
    </ligand>
</feature>
<feature type="binding site" evidence="2">
    <location>
        <position position="732"/>
    </location>
    <ligand>
        <name>Mg(2+)</name>
        <dbReference type="ChEBI" id="CHEBI:18420"/>
        <label>1</label>
        <note>catalytic; for integrase activity</note>
    </ligand>
</feature>
<feature type="binding site" evidence="2">
    <location>
        <position position="1361"/>
    </location>
    <ligand>
        <name>Mg(2+)</name>
        <dbReference type="ChEBI" id="CHEBI:18420"/>
        <label>2</label>
        <note>catalytic; for reverse transcriptase activity</note>
    </ligand>
</feature>
<feature type="binding site" evidence="2">
    <location>
        <position position="1442"/>
    </location>
    <ligand>
        <name>Mg(2+)</name>
        <dbReference type="ChEBI" id="CHEBI:18420"/>
        <label>2</label>
        <note>catalytic; for reverse transcriptase activity</note>
    </ligand>
</feature>
<feature type="binding site" evidence="2">
    <location>
        <position position="1443"/>
    </location>
    <ligand>
        <name>Mg(2+)</name>
        <dbReference type="ChEBI" id="CHEBI:18420"/>
        <label>2</label>
        <note>catalytic; for reverse transcriptase activity</note>
    </ligand>
</feature>
<feature type="binding site" evidence="2">
    <location>
        <position position="1625"/>
    </location>
    <ligand>
        <name>Mg(2+)</name>
        <dbReference type="ChEBI" id="CHEBI:18420"/>
        <label>3</label>
        <note>catalytic; for RNase H activity</note>
    </ligand>
</feature>
<feature type="binding site" evidence="2">
    <location>
        <position position="1667"/>
    </location>
    <ligand>
        <name>Mg(2+)</name>
        <dbReference type="ChEBI" id="CHEBI:18420"/>
        <label>3</label>
        <note>catalytic; for RNase H activity</note>
    </ligand>
</feature>
<feature type="binding site" evidence="2">
    <location>
        <position position="1700"/>
    </location>
    <ligand>
        <name>Mg(2+)</name>
        <dbReference type="ChEBI" id="CHEBI:18420"/>
        <label>3</label>
        <note>catalytic; for RNase H activity</note>
    </ligand>
</feature>
<feature type="site" description="Cleavage; by Ty2 protease" evidence="1">
    <location>
        <begin position="397"/>
        <end position="398"/>
    </location>
</feature>
<feature type="site" description="Cleavage; by Ty2 protease" evidence="1">
    <location>
        <begin position="578"/>
        <end position="579"/>
    </location>
</feature>
<feature type="site" description="Cleavage; by Ty2 protease" evidence="1">
    <location>
        <begin position="1232"/>
        <end position="1233"/>
    </location>
</feature>
<evidence type="ECO:0000250" key="1"/>
<evidence type="ECO:0000255" key="2">
    <source>
        <dbReference type="PROSITE-ProRule" id="PRU00457"/>
    </source>
</evidence>
<evidence type="ECO:0000256" key="3">
    <source>
        <dbReference type="SAM" id="MobiDB-lite"/>
    </source>
</evidence>
<evidence type="ECO:0000305" key="4"/>